<gene>
    <name type="ordered locus">Os01g0856500</name>
    <name type="ordered locus">LOC_Os01g63770</name>
    <name type="ORF">OJ1402_H07.23-1</name>
    <name type="ORF">OJ1402_H07.23-2</name>
    <name evidence="5" type="ORF">OsJ_04119</name>
</gene>
<comment type="function">
    <text evidence="1">Carrier protein involved in proton-driven auxin influx. May mediate the formation of auxin gradient from developing leaves (site of auxin biosynthesis) to tips (By similarity).</text>
</comment>
<comment type="subcellular location">
    <subcellularLocation>
        <location evidence="1">Cell membrane</location>
        <topology evidence="1">Multi-pass membrane protein</topology>
    </subcellularLocation>
</comment>
<comment type="alternative products">
    <event type="alternative splicing"/>
    <isoform>
        <id>Q5N892-1</id>
        <name>1</name>
        <sequence type="displayed"/>
    </isoform>
    <isoform>
        <id>Q5N892-2</id>
        <name>2</name>
        <sequence type="described" ref="VSP_017011"/>
    </isoform>
</comment>
<comment type="similarity">
    <text evidence="4">Belongs to the amino acid/polyamine transporter 2 family. Amino acid/auxin permease (AAAP) (TC 2.A.18.1) subfamily.</text>
</comment>
<name>LAX11_ORYSJ</name>
<keyword id="KW-0025">Alternative splicing</keyword>
<keyword id="KW-0029">Amino-acid transport</keyword>
<keyword id="KW-0927">Auxin signaling pathway</keyword>
<keyword id="KW-1003">Cell membrane</keyword>
<keyword id="KW-0472">Membrane</keyword>
<keyword id="KW-1185">Reference proteome</keyword>
<keyword id="KW-0769">Symport</keyword>
<keyword id="KW-0812">Transmembrane</keyword>
<keyword id="KW-1133">Transmembrane helix</keyword>
<keyword id="KW-0813">Transport</keyword>
<organism>
    <name type="scientific">Oryza sativa subsp. japonica</name>
    <name type="common">Rice</name>
    <dbReference type="NCBI Taxonomy" id="39947"/>
    <lineage>
        <taxon>Eukaryota</taxon>
        <taxon>Viridiplantae</taxon>
        <taxon>Streptophyta</taxon>
        <taxon>Embryophyta</taxon>
        <taxon>Tracheophyta</taxon>
        <taxon>Spermatophyta</taxon>
        <taxon>Magnoliopsida</taxon>
        <taxon>Liliopsida</taxon>
        <taxon>Poales</taxon>
        <taxon>Poaceae</taxon>
        <taxon>BOP clade</taxon>
        <taxon>Oryzoideae</taxon>
        <taxon>Oryzeae</taxon>
        <taxon>Oryzinae</taxon>
        <taxon>Oryza</taxon>
        <taxon>Oryza sativa</taxon>
    </lineage>
</organism>
<dbReference type="EMBL" id="AP003415">
    <property type="protein sequence ID" value="BAD82311.1"/>
    <property type="molecule type" value="Genomic_DNA"/>
</dbReference>
<dbReference type="EMBL" id="AP003415">
    <property type="protein sequence ID" value="BAD82312.1"/>
    <property type="molecule type" value="Genomic_DNA"/>
</dbReference>
<dbReference type="EMBL" id="AP008207">
    <property type="protein sequence ID" value="BAF06760.1"/>
    <property type="molecule type" value="Genomic_DNA"/>
</dbReference>
<dbReference type="EMBL" id="AP014957">
    <property type="protein sequence ID" value="BAS75295.1"/>
    <property type="molecule type" value="Genomic_DNA"/>
</dbReference>
<dbReference type="EMBL" id="CM000138">
    <property type="protein sequence ID" value="EEE55693.1"/>
    <property type="molecule type" value="Genomic_DNA"/>
</dbReference>
<dbReference type="EMBL" id="AK068536">
    <property type="status" value="NOT_ANNOTATED_CDS"/>
    <property type="molecule type" value="mRNA"/>
</dbReference>
<dbReference type="EMBL" id="AK100090">
    <property type="protein sequence ID" value="BAG94439.1"/>
    <property type="molecule type" value="mRNA"/>
</dbReference>
<dbReference type="EMBL" id="AK103239">
    <property type="protein sequence ID" value="BAG95969.1"/>
    <property type="molecule type" value="mRNA"/>
</dbReference>
<dbReference type="RefSeq" id="XP_015613829.1">
    <property type="nucleotide sequence ID" value="XM_015758343.1"/>
</dbReference>
<dbReference type="FunCoup" id="Q5N892">
    <property type="interactions" value="132"/>
</dbReference>
<dbReference type="STRING" id="39947.Q5N892"/>
<dbReference type="PaxDb" id="39947-Q5N892"/>
<dbReference type="EnsemblPlants" id="Os01t0856500-01">
    <molecule id="Q5N892-1"/>
    <property type="protein sequence ID" value="Os01t0856500-01"/>
    <property type="gene ID" value="Os01g0856500"/>
</dbReference>
<dbReference type="EnsemblPlants" id="Os01t0856500-02">
    <molecule id="Q5N892-1"/>
    <property type="protein sequence ID" value="Os01t0856500-02"/>
    <property type="gene ID" value="Os01g0856500"/>
</dbReference>
<dbReference type="Gramene" id="Os01t0856500-01">
    <molecule id="Q5N892-1"/>
    <property type="protein sequence ID" value="Os01t0856500-01"/>
    <property type="gene ID" value="Os01g0856500"/>
</dbReference>
<dbReference type="Gramene" id="Os01t0856500-02">
    <molecule id="Q5N892-1"/>
    <property type="protein sequence ID" value="Os01t0856500-02"/>
    <property type="gene ID" value="Os01g0856500"/>
</dbReference>
<dbReference type="KEGG" id="dosa:Os01g0856500"/>
<dbReference type="eggNOG" id="KOG1303">
    <property type="taxonomic scope" value="Eukaryota"/>
</dbReference>
<dbReference type="HOGENOM" id="CLU_027994_2_0_1"/>
<dbReference type="InParanoid" id="Q5N892"/>
<dbReference type="OMA" id="ARKFWII"/>
<dbReference type="OrthoDB" id="40134at2759"/>
<dbReference type="PlantReactome" id="R-OSA-9608575">
    <property type="pathway name" value="Reproductive meristem phase change"/>
</dbReference>
<dbReference type="PlantReactome" id="R-OSA-9639861">
    <property type="pathway name" value="Development of root hair"/>
</dbReference>
<dbReference type="Proteomes" id="UP000000763">
    <property type="component" value="Chromosome 1"/>
</dbReference>
<dbReference type="Proteomes" id="UP000007752">
    <property type="component" value="Chromosome 1"/>
</dbReference>
<dbReference type="Proteomes" id="UP000059680">
    <property type="component" value="Chromosome 1"/>
</dbReference>
<dbReference type="ExpressionAtlas" id="Q5N892">
    <property type="expression patterns" value="baseline and differential"/>
</dbReference>
<dbReference type="GO" id="GO:0016020">
    <property type="term" value="C:membrane"/>
    <property type="evidence" value="ECO:0000318"/>
    <property type="project" value="GO_Central"/>
</dbReference>
<dbReference type="GO" id="GO:0005886">
    <property type="term" value="C:plasma membrane"/>
    <property type="evidence" value="ECO:0007669"/>
    <property type="project" value="UniProtKB-SubCell"/>
</dbReference>
<dbReference type="GO" id="GO:0015171">
    <property type="term" value="F:amino acid transmembrane transporter activity"/>
    <property type="evidence" value="ECO:0000318"/>
    <property type="project" value="GO_Central"/>
</dbReference>
<dbReference type="GO" id="GO:0015293">
    <property type="term" value="F:symporter activity"/>
    <property type="evidence" value="ECO:0007669"/>
    <property type="project" value="UniProtKB-KW"/>
</dbReference>
<dbReference type="GO" id="GO:0003333">
    <property type="term" value="P:amino acid transmembrane transport"/>
    <property type="evidence" value="ECO:0000318"/>
    <property type="project" value="GO_Central"/>
</dbReference>
<dbReference type="GO" id="GO:0009734">
    <property type="term" value="P:auxin-activated signaling pathway"/>
    <property type="evidence" value="ECO:0007669"/>
    <property type="project" value="UniProtKB-KW"/>
</dbReference>
<dbReference type="InterPro" id="IPR013057">
    <property type="entry name" value="AA_transpt_TM"/>
</dbReference>
<dbReference type="PANTHER" id="PTHR48017">
    <property type="entry name" value="OS05G0424000 PROTEIN-RELATED"/>
    <property type="match status" value="1"/>
</dbReference>
<dbReference type="Pfam" id="PF01490">
    <property type="entry name" value="Aa_trans"/>
    <property type="match status" value="1"/>
</dbReference>
<sequence length="492" mass="54762">MVPREQAEEAIVADSNGKEEEVGVMGVSAGEHGADDHHGGGGKFSMKNLLWHGGSVWDAWFSCASNQVAQVLLTLPYSFSQLGMLSGVLLQLFYGFMGSWTAYLISVLYVEYRSRKEKEGVSFKNHVIQWFEVLDGLLGPYWKAAGLAFNCTFLLFGSVIQLIACASNIYYINDRLDKRTWTYIFGACCATTVFIPSFHNYRIWSFLGLGMTTYTAWYLAIAALLNGQAEGITHTGPTKLVLYFTGATNILYTFGGHAVTVEIMHAMWKPAKFKYIYLLATLYVFTLTLPSASAMYWAFGDELLTHSNAFSLLPKTGWRDAAVILMLIHQFITFGFACTPLYFVWEKVIGMHDTKSICLRALARLPIVVPIWFLAIIFPFFGPINSAVGALLVSFTVYIIPALAHILTYRTASARMNAAEKPPFFLPSWTGMFVLNMFIVVWVLVVGFGLGGWASMVNFIRQIDTFGLFAKCYQCPKPAPALAQSPVPLPHH</sequence>
<reference key="1">
    <citation type="journal article" date="2002" name="Nature">
        <title>The genome sequence and structure of rice chromosome 1.</title>
        <authorList>
            <person name="Sasaki T."/>
            <person name="Matsumoto T."/>
            <person name="Yamamoto K."/>
            <person name="Sakata K."/>
            <person name="Baba T."/>
            <person name="Katayose Y."/>
            <person name="Wu J."/>
            <person name="Niimura Y."/>
            <person name="Cheng Z."/>
            <person name="Nagamura Y."/>
            <person name="Antonio B.A."/>
            <person name="Kanamori H."/>
            <person name="Hosokawa S."/>
            <person name="Masukawa M."/>
            <person name="Arikawa K."/>
            <person name="Chiden Y."/>
            <person name="Hayashi M."/>
            <person name="Okamoto M."/>
            <person name="Ando T."/>
            <person name="Aoki H."/>
            <person name="Arita K."/>
            <person name="Hamada M."/>
            <person name="Harada C."/>
            <person name="Hijishita S."/>
            <person name="Honda M."/>
            <person name="Ichikawa Y."/>
            <person name="Idonuma A."/>
            <person name="Iijima M."/>
            <person name="Ikeda M."/>
            <person name="Ikeno M."/>
            <person name="Ito S."/>
            <person name="Ito T."/>
            <person name="Ito Y."/>
            <person name="Ito Y."/>
            <person name="Iwabuchi A."/>
            <person name="Kamiya K."/>
            <person name="Karasawa W."/>
            <person name="Katagiri S."/>
            <person name="Kikuta A."/>
            <person name="Kobayashi N."/>
            <person name="Kono I."/>
            <person name="Machita K."/>
            <person name="Maehara T."/>
            <person name="Mizuno H."/>
            <person name="Mizubayashi T."/>
            <person name="Mukai Y."/>
            <person name="Nagasaki H."/>
            <person name="Nakashima M."/>
            <person name="Nakama Y."/>
            <person name="Nakamichi Y."/>
            <person name="Nakamura M."/>
            <person name="Namiki N."/>
            <person name="Negishi M."/>
            <person name="Ohta I."/>
            <person name="Ono N."/>
            <person name="Saji S."/>
            <person name="Sakai K."/>
            <person name="Shibata M."/>
            <person name="Shimokawa T."/>
            <person name="Shomura A."/>
            <person name="Song J."/>
            <person name="Takazaki Y."/>
            <person name="Terasawa K."/>
            <person name="Tsuji K."/>
            <person name="Waki K."/>
            <person name="Yamagata H."/>
            <person name="Yamane H."/>
            <person name="Yoshiki S."/>
            <person name="Yoshihara R."/>
            <person name="Yukawa K."/>
            <person name="Zhong H."/>
            <person name="Iwama H."/>
            <person name="Endo T."/>
            <person name="Ito H."/>
            <person name="Hahn J.H."/>
            <person name="Kim H.-I."/>
            <person name="Eun M.-Y."/>
            <person name="Yano M."/>
            <person name="Jiang J."/>
            <person name="Gojobori T."/>
        </authorList>
    </citation>
    <scope>NUCLEOTIDE SEQUENCE [LARGE SCALE GENOMIC DNA]</scope>
    <source>
        <strain>cv. Nipponbare</strain>
    </source>
</reference>
<reference key="2">
    <citation type="journal article" date="2005" name="Nature">
        <title>The map-based sequence of the rice genome.</title>
        <authorList>
            <consortium name="International rice genome sequencing project (IRGSP)"/>
        </authorList>
    </citation>
    <scope>NUCLEOTIDE SEQUENCE [LARGE SCALE GENOMIC DNA]</scope>
    <source>
        <strain>cv. Nipponbare</strain>
    </source>
</reference>
<reference key="3">
    <citation type="journal article" date="2008" name="Nucleic Acids Res.">
        <title>The rice annotation project database (RAP-DB): 2008 update.</title>
        <authorList>
            <consortium name="The rice annotation project (RAP)"/>
        </authorList>
    </citation>
    <scope>GENOME REANNOTATION</scope>
    <source>
        <strain>cv. Nipponbare</strain>
    </source>
</reference>
<reference key="4">
    <citation type="journal article" date="2013" name="Rice">
        <title>Improvement of the Oryza sativa Nipponbare reference genome using next generation sequence and optical map data.</title>
        <authorList>
            <person name="Kawahara Y."/>
            <person name="de la Bastide M."/>
            <person name="Hamilton J.P."/>
            <person name="Kanamori H."/>
            <person name="McCombie W.R."/>
            <person name="Ouyang S."/>
            <person name="Schwartz D.C."/>
            <person name="Tanaka T."/>
            <person name="Wu J."/>
            <person name="Zhou S."/>
            <person name="Childs K.L."/>
            <person name="Davidson R.M."/>
            <person name="Lin H."/>
            <person name="Quesada-Ocampo L."/>
            <person name="Vaillancourt B."/>
            <person name="Sakai H."/>
            <person name="Lee S.S."/>
            <person name="Kim J."/>
            <person name="Numa H."/>
            <person name="Itoh T."/>
            <person name="Buell C.R."/>
            <person name="Matsumoto T."/>
        </authorList>
    </citation>
    <scope>GENOME REANNOTATION</scope>
    <source>
        <strain>cv. Nipponbare</strain>
    </source>
</reference>
<reference key="5">
    <citation type="journal article" date="2005" name="PLoS Biol.">
        <title>The genomes of Oryza sativa: a history of duplications.</title>
        <authorList>
            <person name="Yu J."/>
            <person name="Wang J."/>
            <person name="Lin W."/>
            <person name="Li S."/>
            <person name="Li H."/>
            <person name="Zhou J."/>
            <person name="Ni P."/>
            <person name="Dong W."/>
            <person name="Hu S."/>
            <person name="Zeng C."/>
            <person name="Zhang J."/>
            <person name="Zhang Y."/>
            <person name="Li R."/>
            <person name="Xu Z."/>
            <person name="Li S."/>
            <person name="Li X."/>
            <person name="Zheng H."/>
            <person name="Cong L."/>
            <person name="Lin L."/>
            <person name="Yin J."/>
            <person name="Geng J."/>
            <person name="Li G."/>
            <person name="Shi J."/>
            <person name="Liu J."/>
            <person name="Lv H."/>
            <person name="Li J."/>
            <person name="Wang J."/>
            <person name="Deng Y."/>
            <person name="Ran L."/>
            <person name="Shi X."/>
            <person name="Wang X."/>
            <person name="Wu Q."/>
            <person name="Li C."/>
            <person name="Ren X."/>
            <person name="Wang J."/>
            <person name="Wang X."/>
            <person name="Li D."/>
            <person name="Liu D."/>
            <person name="Zhang X."/>
            <person name="Ji Z."/>
            <person name="Zhao W."/>
            <person name="Sun Y."/>
            <person name="Zhang Z."/>
            <person name="Bao J."/>
            <person name="Han Y."/>
            <person name="Dong L."/>
            <person name="Ji J."/>
            <person name="Chen P."/>
            <person name="Wu S."/>
            <person name="Liu J."/>
            <person name="Xiao Y."/>
            <person name="Bu D."/>
            <person name="Tan J."/>
            <person name="Yang L."/>
            <person name="Ye C."/>
            <person name="Zhang J."/>
            <person name="Xu J."/>
            <person name="Zhou Y."/>
            <person name="Yu Y."/>
            <person name="Zhang B."/>
            <person name="Zhuang S."/>
            <person name="Wei H."/>
            <person name="Liu B."/>
            <person name="Lei M."/>
            <person name="Yu H."/>
            <person name="Li Y."/>
            <person name="Xu H."/>
            <person name="Wei S."/>
            <person name="He X."/>
            <person name="Fang L."/>
            <person name="Zhang Z."/>
            <person name="Zhang Y."/>
            <person name="Huang X."/>
            <person name="Su Z."/>
            <person name="Tong W."/>
            <person name="Li J."/>
            <person name="Tong Z."/>
            <person name="Li S."/>
            <person name="Ye J."/>
            <person name="Wang L."/>
            <person name="Fang L."/>
            <person name="Lei T."/>
            <person name="Chen C.-S."/>
            <person name="Chen H.-C."/>
            <person name="Xu Z."/>
            <person name="Li H."/>
            <person name="Huang H."/>
            <person name="Zhang F."/>
            <person name="Xu H."/>
            <person name="Li N."/>
            <person name="Zhao C."/>
            <person name="Li S."/>
            <person name="Dong L."/>
            <person name="Huang Y."/>
            <person name="Li L."/>
            <person name="Xi Y."/>
            <person name="Qi Q."/>
            <person name="Li W."/>
            <person name="Zhang B."/>
            <person name="Hu W."/>
            <person name="Zhang Y."/>
            <person name="Tian X."/>
            <person name="Jiao Y."/>
            <person name="Liang X."/>
            <person name="Jin J."/>
            <person name="Gao L."/>
            <person name="Zheng W."/>
            <person name="Hao B."/>
            <person name="Liu S.-M."/>
            <person name="Wang W."/>
            <person name="Yuan L."/>
            <person name="Cao M."/>
            <person name="McDermott J."/>
            <person name="Samudrala R."/>
            <person name="Wang J."/>
            <person name="Wong G.K.-S."/>
            <person name="Yang H."/>
        </authorList>
    </citation>
    <scope>NUCLEOTIDE SEQUENCE [LARGE SCALE GENOMIC DNA]</scope>
    <source>
        <strain>cv. Nipponbare</strain>
    </source>
</reference>
<reference key="6">
    <citation type="journal article" date="2003" name="Science">
        <title>Collection, mapping, and annotation of over 28,000 cDNA clones from japonica rice.</title>
        <authorList>
            <consortium name="The rice full-length cDNA consortium"/>
        </authorList>
    </citation>
    <scope>NUCLEOTIDE SEQUENCE [LARGE SCALE MRNA] (ISOFORMS 1 AND 2)</scope>
    <source>
        <strain>cv. Nipponbare</strain>
    </source>
</reference>
<evidence type="ECO:0000250" key="1"/>
<evidence type="ECO:0000255" key="2"/>
<evidence type="ECO:0000303" key="3">
    <source>
    </source>
</evidence>
<evidence type="ECO:0000305" key="4"/>
<evidence type="ECO:0000312" key="5">
    <source>
        <dbReference type="EMBL" id="EEE55693.1"/>
    </source>
</evidence>
<feature type="chain" id="PRO_0000093850" description="Auxin transporter-like protein 1">
    <location>
        <begin position="1"/>
        <end position="492"/>
    </location>
</feature>
<feature type="topological domain" description="Cytoplasmic" evidence="2">
    <location>
        <begin position="1"/>
        <end position="67"/>
    </location>
</feature>
<feature type="transmembrane region" description="Helical" evidence="2">
    <location>
        <begin position="68"/>
        <end position="85"/>
    </location>
</feature>
<feature type="topological domain" description="Extracellular" evidence="2">
    <location>
        <begin position="86"/>
        <end position="87"/>
    </location>
</feature>
<feature type="transmembrane region" description="Helical" evidence="2">
    <location>
        <begin position="88"/>
        <end position="108"/>
    </location>
</feature>
<feature type="topological domain" description="Cytoplasmic" evidence="2">
    <location>
        <begin position="109"/>
        <end position="143"/>
    </location>
</feature>
<feature type="transmembrane region" description="Helical" evidence="2">
    <location>
        <begin position="144"/>
        <end position="164"/>
    </location>
</feature>
<feature type="topological domain" description="Extracellular" evidence="2">
    <location>
        <begin position="165"/>
        <end position="180"/>
    </location>
</feature>
<feature type="transmembrane region" description="Helical" evidence="2">
    <location>
        <begin position="181"/>
        <end position="201"/>
    </location>
</feature>
<feature type="topological domain" description="Cytoplasmic" evidence="2">
    <location>
        <position position="202"/>
    </location>
</feature>
<feature type="transmembrane region" description="Helical" evidence="2">
    <location>
        <begin position="203"/>
        <end position="223"/>
    </location>
</feature>
<feature type="topological domain" description="Extracellular" evidence="2">
    <location>
        <begin position="224"/>
        <end position="240"/>
    </location>
</feature>
<feature type="transmembrane region" description="Helical" evidence="2">
    <location>
        <begin position="241"/>
        <end position="261"/>
    </location>
</feature>
<feature type="topological domain" description="Cytoplasmic" evidence="2">
    <location>
        <begin position="262"/>
        <end position="274"/>
    </location>
</feature>
<feature type="transmembrane region" description="Helical" evidence="2">
    <location>
        <begin position="275"/>
        <end position="295"/>
    </location>
</feature>
<feature type="topological domain" description="Extracellular" evidence="2">
    <location>
        <begin position="296"/>
        <end position="322"/>
    </location>
</feature>
<feature type="transmembrane region" description="Helical" evidence="2">
    <location>
        <begin position="323"/>
        <end position="343"/>
    </location>
</feature>
<feature type="topological domain" description="Cytoplasmic" evidence="2">
    <location>
        <begin position="344"/>
        <end position="364"/>
    </location>
</feature>
<feature type="transmembrane region" description="Helical" evidence="2">
    <location>
        <begin position="365"/>
        <end position="385"/>
    </location>
</feature>
<feature type="topological domain" description="Extracellular" evidence="2">
    <location>
        <position position="386"/>
    </location>
</feature>
<feature type="transmembrane region" description="Helical" evidence="2">
    <location>
        <begin position="387"/>
        <end position="407"/>
    </location>
</feature>
<feature type="topological domain" description="Cytoplasmic" evidence="2">
    <location>
        <begin position="408"/>
        <end position="432"/>
    </location>
</feature>
<feature type="transmembrane region" description="Helical" evidence="2">
    <location>
        <begin position="433"/>
        <end position="453"/>
    </location>
</feature>
<feature type="topological domain" description="Extracellular" evidence="2">
    <location>
        <begin position="454"/>
        <end position="492"/>
    </location>
</feature>
<feature type="splice variant" id="VSP_017011" description="In isoform 2." evidence="3">
    <location>
        <begin position="1"/>
        <end position="210"/>
    </location>
</feature>
<proteinExistence type="evidence at transcript level"/>
<accession>Q5N892</accession>
<accession>Q0JHL8</accession>
<accession>Q5N893</accession>
<protein>
    <recommendedName>
        <fullName>Auxin transporter-like protein 1</fullName>
    </recommendedName>
</protein>